<sequence>MHKVQLIIKLLLQLGIIIVITYIGTEIQKIFHLPLAGSIVGLFLFYLLLQFKIVPLTWVEDGANFLLKTMVFFFIPSVVGIMDVASEITLNYILFFAVIIIGTCIVALSSGYIAEKMSVKHKHRKGVDAYE</sequence>
<protein>
    <recommendedName>
        <fullName>Holin-like protein CidA</fullName>
    </recommendedName>
</protein>
<evidence type="ECO:0000255" key="1"/>
<evidence type="ECO:0000269" key="2">
    <source>
    </source>
</evidence>
<evidence type="ECO:0000305" key="3"/>
<keyword id="KW-1003">Cell membrane</keyword>
<keyword id="KW-0204">Cytolysis</keyword>
<keyword id="KW-0472">Membrane</keyword>
<keyword id="KW-1185">Reference proteome</keyword>
<keyword id="KW-0812">Transmembrane</keyword>
<keyword id="KW-1133">Transmembrane helix</keyword>
<reference key="1">
    <citation type="journal article" date="2003" name="J. Bacteriol.">
        <title>The Staphylococcus aureus cidAB operon: evaluation of its role in regulation of murein hydrolase activity and penicillin tolerance.</title>
        <authorList>
            <person name="Rice K.C."/>
            <person name="Firek B.A."/>
            <person name="Nelson J.B."/>
            <person name="Yang S.-J."/>
            <person name="Patton T.G."/>
            <person name="Bayles K.W."/>
        </authorList>
    </citation>
    <scope>FUNCTION</scope>
    <scope>INTERACTION WITH LRGAB</scope>
</reference>
<reference key="2">
    <citation type="book" date="2006" name="Gram positive pathogens, 2nd edition">
        <title>The Staphylococcus aureus NCTC 8325 genome.</title>
        <editorList>
            <person name="Fischetti V."/>
            <person name="Novick R."/>
            <person name="Ferretti J."/>
            <person name="Portnoy D."/>
            <person name="Rood J."/>
        </editorList>
        <authorList>
            <person name="Gillaspy A.F."/>
            <person name="Worrell V."/>
            <person name="Orvis J."/>
            <person name="Roe B.A."/>
            <person name="Dyer D.W."/>
            <person name="Iandolo J.J."/>
        </authorList>
    </citation>
    <scope>NUCLEOTIDE SEQUENCE [LARGE SCALE GENOMIC DNA]</scope>
    <source>
        <strain>NCTC 8325 / PS 47</strain>
    </source>
</reference>
<reference key="3">
    <citation type="journal article" date="2003" name="Mol. Microbiol.">
        <title>Death's toolbox: examining the molecular components of bacterial programmed cell death.</title>
        <authorList>
            <person name="Rice K.C."/>
            <person name="Bayles K.W."/>
        </authorList>
    </citation>
    <scope>REVIEW</scope>
</reference>
<organism>
    <name type="scientific">Staphylococcus aureus (strain NCTC 8325 / PS 47)</name>
    <dbReference type="NCBI Taxonomy" id="93061"/>
    <lineage>
        <taxon>Bacteria</taxon>
        <taxon>Bacillati</taxon>
        <taxon>Bacillota</taxon>
        <taxon>Bacilli</taxon>
        <taxon>Bacillales</taxon>
        <taxon>Staphylococcaceae</taxon>
        <taxon>Staphylococcus</taxon>
    </lineage>
</organism>
<feature type="chain" id="PRO_0000213183" description="Holin-like protein CidA">
    <location>
        <begin position="1"/>
        <end position="131"/>
    </location>
</feature>
<feature type="transmembrane region" description="Helical" evidence="1">
    <location>
        <begin position="7"/>
        <end position="25"/>
    </location>
</feature>
<feature type="transmembrane region" description="Helical" evidence="1">
    <location>
        <begin position="30"/>
        <end position="49"/>
    </location>
</feature>
<feature type="transmembrane region" description="Helical" evidence="1">
    <location>
        <begin position="62"/>
        <end position="82"/>
    </location>
</feature>
<feature type="transmembrane region" description="Helical" evidence="1">
    <location>
        <begin position="92"/>
        <end position="114"/>
    </location>
</feature>
<accession>P60647</accession>
<accession>Q2FV84</accession>
<gene>
    <name type="primary">cidA</name>
    <name type="ordered locus">SAOUHSC_02851</name>
</gene>
<name>CIDA_STAA8</name>
<dbReference type="EMBL" id="CP000253">
    <property type="protein sequence ID" value="ABD31851.1"/>
    <property type="molecule type" value="Genomic_DNA"/>
</dbReference>
<dbReference type="RefSeq" id="WP_000549734.1">
    <property type="nucleotide sequence ID" value="NZ_LS483365.1"/>
</dbReference>
<dbReference type="RefSeq" id="YP_501308.1">
    <property type="nucleotide sequence ID" value="NC_007795.1"/>
</dbReference>
<dbReference type="SMR" id="P60647"/>
<dbReference type="STRING" id="93061.SAOUHSC_02851"/>
<dbReference type="PaxDb" id="1280-SAXN108_2790"/>
<dbReference type="GeneID" id="3921524"/>
<dbReference type="KEGG" id="sao:SAOUHSC_02851"/>
<dbReference type="PATRIC" id="fig|93061.5.peg.2579"/>
<dbReference type="eggNOG" id="COG1380">
    <property type="taxonomic scope" value="Bacteria"/>
</dbReference>
<dbReference type="HOGENOM" id="CLU_113736_2_1_9"/>
<dbReference type="OrthoDB" id="3176438at2"/>
<dbReference type="PRO" id="PR:P60647"/>
<dbReference type="Proteomes" id="UP000008816">
    <property type="component" value="Chromosome"/>
</dbReference>
<dbReference type="GO" id="GO:0005886">
    <property type="term" value="C:plasma membrane"/>
    <property type="evidence" value="ECO:0007669"/>
    <property type="project" value="UniProtKB-SubCell"/>
</dbReference>
<dbReference type="GO" id="GO:0019835">
    <property type="term" value="P:cytolysis"/>
    <property type="evidence" value="ECO:0007669"/>
    <property type="project" value="UniProtKB-UniRule"/>
</dbReference>
<dbReference type="GO" id="GO:0031640">
    <property type="term" value="P:killing of cells of another organism"/>
    <property type="evidence" value="ECO:0007669"/>
    <property type="project" value="UniProtKB-KW"/>
</dbReference>
<dbReference type="GO" id="GO:0012501">
    <property type="term" value="P:programmed cell death"/>
    <property type="evidence" value="ECO:0007669"/>
    <property type="project" value="UniProtKB-UniRule"/>
</dbReference>
<dbReference type="HAMAP" id="MF_01143">
    <property type="entry name" value="CidA"/>
    <property type="match status" value="1"/>
</dbReference>
<dbReference type="InterPro" id="IPR023760">
    <property type="entry name" value="Holin-like_CidA"/>
</dbReference>
<dbReference type="InterPro" id="IPR005538">
    <property type="entry name" value="LrgA/CidA"/>
</dbReference>
<dbReference type="PANTHER" id="PTHR33931:SF2">
    <property type="entry name" value="HOLIN-LIKE PROTEIN CIDA"/>
    <property type="match status" value="1"/>
</dbReference>
<dbReference type="PANTHER" id="PTHR33931">
    <property type="entry name" value="HOLIN-LIKE PROTEIN CIDA-RELATED"/>
    <property type="match status" value="1"/>
</dbReference>
<dbReference type="Pfam" id="PF03788">
    <property type="entry name" value="LrgA"/>
    <property type="match status" value="1"/>
</dbReference>
<comment type="function">
    <text evidence="2">Increases the activity of extracellular murein hydrolases possibly by mediating their export via hole formation. Inhibited by the antiholin-like proteins LrgAB. In an unstressed cell, the LrgAB products probably inhibit the function of the CidAB proteins. When a cell is stressed by the addition of antibiotics or by other factors in the environment, the CidAB proteins possibly oligomerize within the bacterial cell membrane, creating lesions that disrupt the proton motive force, which in turn results in loss of cell viability. These lesions are also hypothesized to regulate the subsequent cell lysis by either allowing the murein hydrolases access to the cell wall substrate and/or regulating their activity by a possible change in the cell wall pH that results from loss of membrane potential.</text>
</comment>
<comment type="subcellular location">
    <subcellularLocation>
        <location evidence="3">Cell membrane</location>
        <topology evidence="3">Multi-pass membrane protein</topology>
    </subcellularLocation>
</comment>
<comment type="similarity">
    <text evidence="3">Belongs to the CidA/LrgA family. CidA subfamily.</text>
</comment>
<proteinExistence type="evidence at protein level"/>